<proteinExistence type="inferred from homology"/>
<evidence type="ECO:0000255" key="1">
    <source>
        <dbReference type="HAMAP-Rule" id="MF_01865"/>
    </source>
</evidence>
<evidence type="ECO:0000255" key="2">
    <source>
        <dbReference type="PROSITE-ProRule" id="PRU01266"/>
    </source>
</evidence>
<reference key="1">
    <citation type="submission" date="2006-11" db="EMBL/GenBank/DDBJ databases">
        <title>Identification and characterization of a new conjugation/ type IVA secretion system (trb/tra) of L. pneumophila Corby localized on a mobile genomic island.</title>
        <authorList>
            <person name="Gloeckner G."/>
            <person name="Albert-Weissenberger C."/>
            <person name="Weinmann E."/>
            <person name="Jacobi S."/>
            <person name="Schunder E."/>
            <person name="Steinert M."/>
            <person name="Buchrieser C."/>
            <person name="Hacker J."/>
            <person name="Heuner K."/>
        </authorList>
    </citation>
    <scope>NUCLEOTIDE SEQUENCE [LARGE SCALE GENOMIC DNA]</scope>
    <source>
        <strain>Corby</strain>
    </source>
</reference>
<keyword id="KW-0004">4Fe-4S</keyword>
<keyword id="KW-0963">Cytoplasm</keyword>
<keyword id="KW-0408">Iron</keyword>
<keyword id="KW-0411">Iron-sulfur</keyword>
<keyword id="KW-0479">Metal-binding</keyword>
<keyword id="KW-0949">S-adenosyl-L-methionine</keyword>
<keyword id="KW-0808">Transferase</keyword>
<protein>
    <recommendedName>
        <fullName evidence="1">Ribosomal protein uS12 methylthiotransferase RimO</fullName>
        <shortName evidence="1">uS12 MTTase</shortName>
        <shortName evidence="1">uS12 methylthiotransferase</shortName>
        <ecNumber evidence="1">2.8.4.4</ecNumber>
    </recommendedName>
    <alternativeName>
        <fullName evidence="1">Ribosomal protein uS12 (aspartate-C(3))-methylthiotransferase</fullName>
    </alternativeName>
    <alternativeName>
        <fullName evidence="1">Ribosome maturation factor RimO</fullName>
    </alternativeName>
</protein>
<comment type="function">
    <text evidence="1">Catalyzes the methylthiolation of an aspartic acid residue of ribosomal protein uS12.</text>
</comment>
<comment type="catalytic activity">
    <reaction evidence="1">
        <text>L-aspartate(89)-[ribosomal protein uS12]-hydrogen + (sulfur carrier)-SH + AH2 + 2 S-adenosyl-L-methionine = 3-methylsulfanyl-L-aspartate(89)-[ribosomal protein uS12]-hydrogen + (sulfur carrier)-H + 5'-deoxyadenosine + L-methionine + A + S-adenosyl-L-homocysteine + 2 H(+)</text>
        <dbReference type="Rhea" id="RHEA:37087"/>
        <dbReference type="Rhea" id="RHEA-COMP:10460"/>
        <dbReference type="Rhea" id="RHEA-COMP:10461"/>
        <dbReference type="Rhea" id="RHEA-COMP:14737"/>
        <dbReference type="Rhea" id="RHEA-COMP:14739"/>
        <dbReference type="ChEBI" id="CHEBI:13193"/>
        <dbReference type="ChEBI" id="CHEBI:15378"/>
        <dbReference type="ChEBI" id="CHEBI:17319"/>
        <dbReference type="ChEBI" id="CHEBI:17499"/>
        <dbReference type="ChEBI" id="CHEBI:29917"/>
        <dbReference type="ChEBI" id="CHEBI:29961"/>
        <dbReference type="ChEBI" id="CHEBI:57844"/>
        <dbReference type="ChEBI" id="CHEBI:57856"/>
        <dbReference type="ChEBI" id="CHEBI:59789"/>
        <dbReference type="ChEBI" id="CHEBI:64428"/>
        <dbReference type="ChEBI" id="CHEBI:73599"/>
        <dbReference type="EC" id="2.8.4.4"/>
    </reaction>
</comment>
<comment type="cofactor">
    <cofactor evidence="1">
        <name>[4Fe-4S] cluster</name>
        <dbReference type="ChEBI" id="CHEBI:49883"/>
    </cofactor>
    <text evidence="1">Binds 2 [4Fe-4S] clusters. One cluster is coordinated with 3 cysteines and an exchangeable S-adenosyl-L-methionine.</text>
</comment>
<comment type="subcellular location">
    <subcellularLocation>
        <location evidence="1">Cytoplasm</location>
    </subcellularLocation>
</comment>
<comment type="similarity">
    <text evidence="1">Belongs to the methylthiotransferase family. RimO subfamily.</text>
</comment>
<gene>
    <name evidence="1" type="primary">rimO</name>
    <name type="ordered locus">LPC_2609</name>
</gene>
<sequence>MNHKVGFVSLGCPKALVDSERIITQLKAQGYELVPTYEDAGVVVINTCGFIDSAVQESLDTIKEAMAENGRVIVTGCLGAKADVIKNACPDVLHISGAHAYEEVVNAVHQHLPPPADPFTQLIPPQGIKLTPRHYAYLKISEGCNQKCTFCIIPTMRGKLQSYPMAQILTEAKKLKQAGVKELLVISQDTSAYGVDTRYQQVEWQGKTVNTRFYDLCEQLGELGIWVRLHYVYPYPHVDDIVPLMRDGLILPYLDIPLQHANSRILKAMKRPASSENTLLRIASWREICPDITLRSTFIVGFPGETEEEFSELLAFLKEAQLDRVGCFKYSPVEGAKANDLDNPVSEDIKEERYHRFMQVQAEISRNKLKNKIGSTQTVLIDEITEDQIIARSKSDAPEIDGLVYLPKISGITVGSFAEAMITDSDDYDLYGDLEYSLA</sequence>
<accession>A5IGM4</accession>
<feature type="chain" id="PRO_0000374873" description="Ribosomal protein uS12 methylthiotransferase RimO">
    <location>
        <begin position="1"/>
        <end position="439"/>
    </location>
</feature>
<feature type="domain" description="MTTase N-terminal" evidence="1">
    <location>
        <begin position="3"/>
        <end position="113"/>
    </location>
</feature>
<feature type="domain" description="Radical SAM core" evidence="2">
    <location>
        <begin position="130"/>
        <end position="367"/>
    </location>
</feature>
<feature type="domain" description="TRAM" evidence="1">
    <location>
        <begin position="370"/>
        <end position="436"/>
    </location>
</feature>
<feature type="binding site" evidence="1">
    <location>
        <position position="12"/>
    </location>
    <ligand>
        <name>[4Fe-4S] cluster</name>
        <dbReference type="ChEBI" id="CHEBI:49883"/>
        <label>1</label>
    </ligand>
</feature>
<feature type="binding site" evidence="1">
    <location>
        <position position="48"/>
    </location>
    <ligand>
        <name>[4Fe-4S] cluster</name>
        <dbReference type="ChEBI" id="CHEBI:49883"/>
        <label>1</label>
    </ligand>
</feature>
<feature type="binding site" evidence="1">
    <location>
        <position position="77"/>
    </location>
    <ligand>
        <name>[4Fe-4S] cluster</name>
        <dbReference type="ChEBI" id="CHEBI:49883"/>
        <label>1</label>
    </ligand>
</feature>
<feature type="binding site" evidence="1">
    <location>
        <position position="144"/>
    </location>
    <ligand>
        <name>[4Fe-4S] cluster</name>
        <dbReference type="ChEBI" id="CHEBI:49883"/>
        <label>2</label>
        <note>4Fe-4S-S-AdoMet</note>
    </ligand>
</feature>
<feature type="binding site" evidence="1">
    <location>
        <position position="148"/>
    </location>
    <ligand>
        <name>[4Fe-4S] cluster</name>
        <dbReference type="ChEBI" id="CHEBI:49883"/>
        <label>2</label>
        <note>4Fe-4S-S-AdoMet</note>
    </ligand>
</feature>
<feature type="binding site" evidence="1">
    <location>
        <position position="151"/>
    </location>
    <ligand>
        <name>[4Fe-4S] cluster</name>
        <dbReference type="ChEBI" id="CHEBI:49883"/>
        <label>2</label>
        <note>4Fe-4S-S-AdoMet</note>
    </ligand>
</feature>
<organism>
    <name type="scientific">Legionella pneumophila (strain Corby)</name>
    <dbReference type="NCBI Taxonomy" id="400673"/>
    <lineage>
        <taxon>Bacteria</taxon>
        <taxon>Pseudomonadati</taxon>
        <taxon>Pseudomonadota</taxon>
        <taxon>Gammaproteobacteria</taxon>
        <taxon>Legionellales</taxon>
        <taxon>Legionellaceae</taxon>
        <taxon>Legionella</taxon>
    </lineage>
</organism>
<dbReference type="EC" id="2.8.4.4" evidence="1"/>
<dbReference type="EMBL" id="CP000675">
    <property type="protein sequence ID" value="ABQ56524.1"/>
    <property type="molecule type" value="Genomic_DNA"/>
</dbReference>
<dbReference type="RefSeq" id="WP_011945836.1">
    <property type="nucleotide sequence ID" value="NZ_JAPMSS010000016.1"/>
</dbReference>
<dbReference type="SMR" id="A5IGM4"/>
<dbReference type="KEGG" id="lpc:LPC_2609"/>
<dbReference type="HOGENOM" id="CLU_018697_0_0_6"/>
<dbReference type="GO" id="GO:0005829">
    <property type="term" value="C:cytosol"/>
    <property type="evidence" value="ECO:0007669"/>
    <property type="project" value="TreeGrafter"/>
</dbReference>
<dbReference type="GO" id="GO:0051539">
    <property type="term" value="F:4 iron, 4 sulfur cluster binding"/>
    <property type="evidence" value="ECO:0007669"/>
    <property type="project" value="UniProtKB-UniRule"/>
</dbReference>
<dbReference type="GO" id="GO:0035599">
    <property type="term" value="F:aspartic acid methylthiotransferase activity"/>
    <property type="evidence" value="ECO:0007669"/>
    <property type="project" value="TreeGrafter"/>
</dbReference>
<dbReference type="GO" id="GO:0046872">
    <property type="term" value="F:metal ion binding"/>
    <property type="evidence" value="ECO:0007669"/>
    <property type="project" value="UniProtKB-KW"/>
</dbReference>
<dbReference type="GO" id="GO:0103039">
    <property type="term" value="F:protein methylthiotransferase activity"/>
    <property type="evidence" value="ECO:0007669"/>
    <property type="project" value="UniProtKB-EC"/>
</dbReference>
<dbReference type="GO" id="GO:0006400">
    <property type="term" value="P:tRNA modification"/>
    <property type="evidence" value="ECO:0007669"/>
    <property type="project" value="InterPro"/>
</dbReference>
<dbReference type="CDD" id="cd01335">
    <property type="entry name" value="Radical_SAM"/>
    <property type="match status" value="1"/>
</dbReference>
<dbReference type="FunFam" id="3.40.50.12160:FF:000002">
    <property type="entry name" value="Ribosomal protein S12 methylthiotransferase RimO"/>
    <property type="match status" value="1"/>
</dbReference>
<dbReference type="FunFam" id="3.80.30.20:FF:000001">
    <property type="entry name" value="tRNA-2-methylthio-N(6)-dimethylallyladenosine synthase 2"/>
    <property type="match status" value="1"/>
</dbReference>
<dbReference type="Gene3D" id="3.40.50.12160">
    <property type="entry name" value="Methylthiotransferase, N-terminal domain"/>
    <property type="match status" value="1"/>
</dbReference>
<dbReference type="Gene3D" id="2.40.50.140">
    <property type="entry name" value="Nucleic acid-binding proteins"/>
    <property type="match status" value="1"/>
</dbReference>
<dbReference type="Gene3D" id="3.80.30.20">
    <property type="entry name" value="tm_1862 like domain"/>
    <property type="match status" value="1"/>
</dbReference>
<dbReference type="HAMAP" id="MF_01865">
    <property type="entry name" value="MTTase_RimO"/>
    <property type="match status" value="1"/>
</dbReference>
<dbReference type="InterPro" id="IPR006638">
    <property type="entry name" value="Elp3/MiaA/NifB-like_rSAM"/>
</dbReference>
<dbReference type="InterPro" id="IPR005839">
    <property type="entry name" value="Methylthiotransferase"/>
</dbReference>
<dbReference type="InterPro" id="IPR020612">
    <property type="entry name" value="Methylthiotransferase_CS"/>
</dbReference>
<dbReference type="InterPro" id="IPR013848">
    <property type="entry name" value="Methylthiotransferase_N"/>
</dbReference>
<dbReference type="InterPro" id="IPR038135">
    <property type="entry name" value="Methylthiotransferase_N_sf"/>
</dbReference>
<dbReference type="InterPro" id="IPR012340">
    <property type="entry name" value="NA-bd_OB-fold"/>
</dbReference>
<dbReference type="InterPro" id="IPR005840">
    <property type="entry name" value="Ribosomal_uS12_MeSTrfase_RimO"/>
</dbReference>
<dbReference type="InterPro" id="IPR007197">
    <property type="entry name" value="rSAM"/>
</dbReference>
<dbReference type="InterPro" id="IPR023404">
    <property type="entry name" value="rSAM_horseshoe"/>
</dbReference>
<dbReference type="InterPro" id="IPR002792">
    <property type="entry name" value="TRAM_dom"/>
</dbReference>
<dbReference type="NCBIfam" id="TIGR01125">
    <property type="entry name" value="30S ribosomal protein S12 methylthiotransferase RimO"/>
    <property type="match status" value="1"/>
</dbReference>
<dbReference type="NCBIfam" id="TIGR00089">
    <property type="entry name" value="MiaB/RimO family radical SAM methylthiotransferase"/>
    <property type="match status" value="1"/>
</dbReference>
<dbReference type="PANTHER" id="PTHR43837">
    <property type="entry name" value="RIBOSOMAL PROTEIN S12 METHYLTHIOTRANSFERASE RIMO"/>
    <property type="match status" value="1"/>
</dbReference>
<dbReference type="PANTHER" id="PTHR43837:SF1">
    <property type="entry name" value="RIBOSOMAL PROTEIN US12 METHYLTHIOTRANSFERASE RIMO"/>
    <property type="match status" value="1"/>
</dbReference>
<dbReference type="Pfam" id="PF04055">
    <property type="entry name" value="Radical_SAM"/>
    <property type="match status" value="1"/>
</dbReference>
<dbReference type="Pfam" id="PF18693">
    <property type="entry name" value="TRAM_2"/>
    <property type="match status" value="1"/>
</dbReference>
<dbReference type="Pfam" id="PF00919">
    <property type="entry name" value="UPF0004"/>
    <property type="match status" value="1"/>
</dbReference>
<dbReference type="SFLD" id="SFLDG01082">
    <property type="entry name" value="B12-binding_domain_containing"/>
    <property type="match status" value="1"/>
</dbReference>
<dbReference type="SFLD" id="SFLDG01061">
    <property type="entry name" value="methylthiotransferase"/>
    <property type="match status" value="1"/>
</dbReference>
<dbReference type="SFLD" id="SFLDF00274">
    <property type="entry name" value="ribosomal_protein_S12_methylth"/>
    <property type="match status" value="1"/>
</dbReference>
<dbReference type="SMART" id="SM00729">
    <property type="entry name" value="Elp3"/>
    <property type="match status" value="1"/>
</dbReference>
<dbReference type="SUPFAM" id="SSF102114">
    <property type="entry name" value="Radical SAM enzymes"/>
    <property type="match status" value="1"/>
</dbReference>
<dbReference type="PROSITE" id="PS51449">
    <property type="entry name" value="MTTASE_N"/>
    <property type="match status" value="1"/>
</dbReference>
<dbReference type="PROSITE" id="PS01278">
    <property type="entry name" value="MTTASE_RADICAL"/>
    <property type="match status" value="1"/>
</dbReference>
<dbReference type="PROSITE" id="PS51918">
    <property type="entry name" value="RADICAL_SAM"/>
    <property type="match status" value="1"/>
</dbReference>
<dbReference type="PROSITE" id="PS50926">
    <property type="entry name" value="TRAM"/>
    <property type="match status" value="1"/>
</dbReference>
<name>RIMO_LEGPC</name>